<keyword id="KW-0539">Nucleus</keyword>
<keyword id="KW-1185">Reference proteome</keyword>
<keyword id="KW-0804">Transcription</keyword>
<keyword id="KW-0805">Transcription regulation</keyword>
<protein>
    <recommendedName>
        <fullName>Regulator of rDNA transcription 14</fullName>
    </recommendedName>
</protein>
<proteinExistence type="inferred from homology"/>
<organism>
    <name type="scientific">Eremothecium gossypii (strain ATCC 10895 / CBS 109.51 / FGSC 9923 / NRRL Y-1056)</name>
    <name type="common">Yeast</name>
    <name type="synonym">Ashbya gossypii</name>
    <dbReference type="NCBI Taxonomy" id="284811"/>
    <lineage>
        <taxon>Eukaryota</taxon>
        <taxon>Fungi</taxon>
        <taxon>Dikarya</taxon>
        <taxon>Ascomycota</taxon>
        <taxon>Saccharomycotina</taxon>
        <taxon>Saccharomycetes</taxon>
        <taxon>Saccharomycetales</taxon>
        <taxon>Saccharomycetaceae</taxon>
        <taxon>Eremothecium</taxon>
    </lineage>
</organism>
<name>RRT14_EREGS</name>
<comment type="function">
    <text evidence="1">Involved in ribosome biogenesis, probably through modulation of rDNA transcription.</text>
</comment>
<comment type="subcellular location">
    <subcellularLocation>
        <location evidence="1">Nucleus</location>
        <location evidence="1">Nucleolus</location>
    </subcellularLocation>
</comment>
<comment type="similarity">
    <text evidence="3">Belongs to the RRT14 family.</text>
</comment>
<gene>
    <name type="primary">RRT14</name>
    <name type="ordered locus">AER376W</name>
</gene>
<evidence type="ECO:0000250" key="1"/>
<evidence type="ECO:0000256" key="2">
    <source>
        <dbReference type="SAM" id="MobiDB-lite"/>
    </source>
</evidence>
<evidence type="ECO:0000305" key="3"/>
<accession>Q755Z1</accession>
<feature type="chain" id="PRO_0000404334" description="Regulator of rDNA transcription 14">
    <location>
        <begin position="1"/>
        <end position="155"/>
    </location>
</feature>
<feature type="region of interest" description="Disordered" evidence="2">
    <location>
        <begin position="1"/>
        <end position="74"/>
    </location>
</feature>
<feature type="region of interest" description="Disordered" evidence="2">
    <location>
        <begin position="100"/>
        <end position="155"/>
    </location>
</feature>
<feature type="compositionally biased region" description="Basic and acidic residues" evidence="2">
    <location>
        <begin position="1"/>
        <end position="31"/>
    </location>
</feature>
<feature type="compositionally biased region" description="Basic and acidic residues" evidence="2">
    <location>
        <begin position="39"/>
        <end position="62"/>
    </location>
</feature>
<feature type="compositionally biased region" description="Basic and acidic residues" evidence="2">
    <location>
        <begin position="115"/>
        <end position="128"/>
    </location>
</feature>
<feature type="compositionally biased region" description="Acidic residues" evidence="2">
    <location>
        <begin position="141"/>
        <end position="155"/>
    </location>
</feature>
<dbReference type="EMBL" id="AE016818">
    <property type="protein sequence ID" value="AAS53056.2"/>
    <property type="molecule type" value="Genomic_DNA"/>
</dbReference>
<dbReference type="RefSeq" id="NP_985232.2">
    <property type="nucleotide sequence ID" value="NM_210586.2"/>
</dbReference>
<dbReference type="SMR" id="Q755Z1"/>
<dbReference type="FunCoup" id="Q755Z1">
    <property type="interactions" value="293"/>
</dbReference>
<dbReference type="STRING" id="284811.Q755Z1"/>
<dbReference type="EnsemblFungi" id="AAS53056">
    <property type="protein sequence ID" value="AAS53056"/>
    <property type="gene ID" value="AGOS_AER376W"/>
</dbReference>
<dbReference type="GeneID" id="4621448"/>
<dbReference type="KEGG" id="ago:AGOS_AER376W"/>
<dbReference type="eggNOG" id="ENOG502S1G1">
    <property type="taxonomic scope" value="Eukaryota"/>
</dbReference>
<dbReference type="HOGENOM" id="CLU_095038_0_0_1"/>
<dbReference type="InParanoid" id="Q755Z1"/>
<dbReference type="OMA" id="GHAMEAK"/>
<dbReference type="OrthoDB" id="4069371at2759"/>
<dbReference type="Proteomes" id="UP000000591">
    <property type="component" value="Chromosome V"/>
</dbReference>
<dbReference type="GO" id="GO:0005730">
    <property type="term" value="C:nucleolus"/>
    <property type="evidence" value="ECO:0007669"/>
    <property type="project" value="UniProtKB-SubCell"/>
</dbReference>
<dbReference type="InterPro" id="IPR031404">
    <property type="entry name" value="Rrt14"/>
</dbReference>
<dbReference type="Pfam" id="PF17075">
    <property type="entry name" value="RRT14"/>
    <property type="match status" value="1"/>
</dbReference>
<reference key="1">
    <citation type="journal article" date="2004" name="Science">
        <title>The Ashbya gossypii genome as a tool for mapping the ancient Saccharomyces cerevisiae genome.</title>
        <authorList>
            <person name="Dietrich F.S."/>
            <person name="Voegeli S."/>
            <person name="Brachat S."/>
            <person name="Lerch A."/>
            <person name="Gates K."/>
            <person name="Steiner S."/>
            <person name="Mohr C."/>
            <person name="Poehlmann R."/>
            <person name="Luedi P."/>
            <person name="Choi S."/>
            <person name="Wing R.A."/>
            <person name="Flavier A."/>
            <person name="Gaffney T.D."/>
            <person name="Philippsen P."/>
        </authorList>
    </citation>
    <scope>NUCLEOTIDE SEQUENCE [LARGE SCALE GENOMIC DNA]</scope>
    <source>
        <strain>ATCC 10895 / CBS 109.51 / FGSC 9923 / NRRL Y-1056</strain>
    </source>
</reference>
<reference key="2">
    <citation type="journal article" date="2013" name="G3 (Bethesda)">
        <title>Genomes of Ashbya fungi isolated from insects reveal four mating-type loci, numerous translocations, lack of transposons, and distinct gene duplications.</title>
        <authorList>
            <person name="Dietrich F.S."/>
            <person name="Voegeli S."/>
            <person name="Kuo S."/>
            <person name="Philippsen P."/>
        </authorList>
    </citation>
    <scope>GENOME REANNOTATION</scope>
    <source>
        <strain>ATCC 10895 / CBS 109.51 / FGSC 9923 / NRRL Y-1056</strain>
    </source>
</reference>
<sequence length="155" mass="17867">MKQRVAVRERDRLQEKERLRRQRQRAEREARQQASQAEQEAKLAALERHQETGRLTKEEKRYLNKRTRQGAARARTWDLDEDEADEAAALQSQILDRIGSASGAGRVRKQRRARIREALPKASEDRRYAGLTPGLAPVGMSDEESSDEELSDEED</sequence>